<feature type="chain" id="PRO_1000072578" description="UDP-2,3-diacylglucosamine hydrolase">
    <location>
        <begin position="1"/>
        <end position="235"/>
    </location>
</feature>
<feature type="binding site" evidence="1">
    <location>
        <position position="9"/>
    </location>
    <ligand>
        <name>Mn(2+)</name>
        <dbReference type="ChEBI" id="CHEBI:29035"/>
        <label>1</label>
    </ligand>
</feature>
<feature type="binding site" evidence="1">
    <location>
        <position position="11"/>
    </location>
    <ligand>
        <name>Mn(2+)</name>
        <dbReference type="ChEBI" id="CHEBI:29035"/>
        <label>1</label>
    </ligand>
</feature>
<feature type="binding site" evidence="1">
    <location>
        <position position="42"/>
    </location>
    <ligand>
        <name>Mn(2+)</name>
        <dbReference type="ChEBI" id="CHEBI:29035"/>
        <label>1</label>
    </ligand>
</feature>
<feature type="binding site" evidence="1">
    <location>
        <position position="42"/>
    </location>
    <ligand>
        <name>Mn(2+)</name>
        <dbReference type="ChEBI" id="CHEBI:29035"/>
        <label>2</label>
    </ligand>
</feature>
<feature type="binding site" evidence="1">
    <location>
        <begin position="80"/>
        <end position="81"/>
    </location>
    <ligand>
        <name>substrate</name>
    </ligand>
</feature>
<feature type="binding site" evidence="1">
    <location>
        <position position="80"/>
    </location>
    <ligand>
        <name>Mn(2+)</name>
        <dbReference type="ChEBI" id="CHEBI:29035"/>
        <label>2</label>
    </ligand>
</feature>
<feature type="binding site" evidence="1">
    <location>
        <position position="115"/>
    </location>
    <ligand>
        <name>Mn(2+)</name>
        <dbReference type="ChEBI" id="CHEBI:29035"/>
        <label>2</label>
    </ligand>
</feature>
<feature type="binding site" evidence="1">
    <location>
        <position position="123"/>
    </location>
    <ligand>
        <name>substrate</name>
    </ligand>
</feature>
<feature type="binding site" evidence="1">
    <location>
        <position position="161"/>
    </location>
    <ligand>
        <name>substrate</name>
    </ligand>
</feature>
<feature type="binding site" evidence="1">
    <location>
        <position position="165"/>
    </location>
    <ligand>
        <name>substrate</name>
    </ligand>
</feature>
<feature type="binding site" evidence="1">
    <location>
        <position position="168"/>
    </location>
    <ligand>
        <name>substrate</name>
    </ligand>
</feature>
<feature type="binding site" evidence="1">
    <location>
        <position position="196"/>
    </location>
    <ligand>
        <name>Mn(2+)</name>
        <dbReference type="ChEBI" id="CHEBI:29035"/>
        <label>2</label>
    </ligand>
</feature>
<feature type="binding site" evidence="1">
    <location>
        <position position="196"/>
    </location>
    <ligand>
        <name>substrate</name>
    </ligand>
</feature>
<feature type="binding site" evidence="1">
    <location>
        <position position="198"/>
    </location>
    <ligand>
        <name>Mn(2+)</name>
        <dbReference type="ChEBI" id="CHEBI:29035"/>
        <label>1</label>
    </ligand>
</feature>
<proteinExistence type="inferred from homology"/>
<evidence type="ECO:0000255" key="1">
    <source>
        <dbReference type="HAMAP-Rule" id="MF_00575"/>
    </source>
</evidence>
<gene>
    <name evidence="1" type="primary">lpxH</name>
    <name type="ordered locus">Asuc_2070</name>
</gene>
<dbReference type="EC" id="3.6.1.54" evidence="1"/>
<dbReference type="EMBL" id="CP000746">
    <property type="protein sequence ID" value="ABR75416.1"/>
    <property type="molecule type" value="Genomic_DNA"/>
</dbReference>
<dbReference type="RefSeq" id="WP_012073792.1">
    <property type="nucleotide sequence ID" value="NC_009655.1"/>
</dbReference>
<dbReference type="SMR" id="A6VR19"/>
<dbReference type="STRING" id="339671.Asuc_2070"/>
<dbReference type="KEGG" id="asu:Asuc_2070"/>
<dbReference type="eggNOG" id="COG2908">
    <property type="taxonomic scope" value="Bacteria"/>
</dbReference>
<dbReference type="HOGENOM" id="CLU_074586_0_0_6"/>
<dbReference type="OrthoDB" id="9783283at2"/>
<dbReference type="UniPathway" id="UPA00359">
    <property type="reaction ID" value="UER00480"/>
</dbReference>
<dbReference type="Proteomes" id="UP000001114">
    <property type="component" value="Chromosome"/>
</dbReference>
<dbReference type="GO" id="GO:0005737">
    <property type="term" value="C:cytoplasm"/>
    <property type="evidence" value="ECO:0007669"/>
    <property type="project" value="InterPro"/>
</dbReference>
<dbReference type="GO" id="GO:0019897">
    <property type="term" value="C:extrinsic component of plasma membrane"/>
    <property type="evidence" value="ECO:0007669"/>
    <property type="project" value="UniProtKB-UniRule"/>
</dbReference>
<dbReference type="GO" id="GO:0030145">
    <property type="term" value="F:manganese ion binding"/>
    <property type="evidence" value="ECO:0007669"/>
    <property type="project" value="UniProtKB-UniRule"/>
</dbReference>
<dbReference type="GO" id="GO:0008758">
    <property type="term" value="F:UDP-2,3-diacylglucosamine hydrolase activity"/>
    <property type="evidence" value="ECO:0007669"/>
    <property type="project" value="UniProtKB-UniRule"/>
</dbReference>
<dbReference type="GO" id="GO:0009245">
    <property type="term" value="P:lipid A biosynthetic process"/>
    <property type="evidence" value="ECO:0007669"/>
    <property type="project" value="UniProtKB-UniRule"/>
</dbReference>
<dbReference type="CDD" id="cd07398">
    <property type="entry name" value="MPP_YbbF-LpxH"/>
    <property type="match status" value="1"/>
</dbReference>
<dbReference type="Gene3D" id="3.60.21.10">
    <property type="match status" value="1"/>
</dbReference>
<dbReference type="HAMAP" id="MF_00575">
    <property type="entry name" value="LpxH"/>
    <property type="match status" value="1"/>
</dbReference>
<dbReference type="InterPro" id="IPR004843">
    <property type="entry name" value="Calcineurin-like_PHP_ApaH"/>
</dbReference>
<dbReference type="InterPro" id="IPR043461">
    <property type="entry name" value="LpxH-like"/>
</dbReference>
<dbReference type="InterPro" id="IPR029052">
    <property type="entry name" value="Metallo-depent_PP-like"/>
</dbReference>
<dbReference type="InterPro" id="IPR010138">
    <property type="entry name" value="UDP-diacylglucosamine_Hdrlase"/>
</dbReference>
<dbReference type="NCBIfam" id="TIGR01854">
    <property type="entry name" value="lipid_A_lpxH"/>
    <property type="match status" value="1"/>
</dbReference>
<dbReference type="NCBIfam" id="NF003743">
    <property type="entry name" value="PRK05340.1"/>
    <property type="match status" value="1"/>
</dbReference>
<dbReference type="PANTHER" id="PTHR34990:SF1">
    <property type="entry name" value="UDP-2,3-DIACYLGLUCOSAMINE HYDROLASE"/>
    <property type="match status" value="1"/>
</dbReference>
<dbReference type="PANTHER" id="PTHR34990">
    <property type="entry name" value="UDP-2,3-DIACYLGLUCOSAMINE HYDROLASE-RELATED"/>
    <property type="match status" value="1"/>
</dbReference>
<dbReference type="Pfam" id="PF00149">
    <property type="entry name" value="Metallophos"/>
    <property type="match status" value="1"/>
</dbReference>
<dbReference type="SUPFAM" id="SSF56300">
    <property type="entry name" value="Metallo-dependent phosphatases"/>
    <property type="match status" value="1"/>
</dbReference>
<organism>
    <name type="scientific">Actinobacillus succinogenes (strain ATCC 55618 / DSM 22257 / CCUG 43843 / 130Z)</name>
    <dbReference type="NCBI Taxonomy" id="339671"/>
    <lineage>
        <taxon>Bacteria</taxon>
        <taxon>Pseudomonadati</taxon>
        <taxon>Pseudomonadota</taxon>
        <taxon>Gammaproteobacteria</taxon>
        <taxon>Pasteurellales</taxon>
        <taxon>Pasteurellaceae</taxon>
        <taxon>Actinobacillus</taxon>
    </lineage>
</organism>
<protein>
    <recommendedName>
        <fullName evidence="1">UDP-2,3-diacylglucosamine hydrolase</fullName>
        <ecNumber evidence="1">3.6.1.54</ecNumber>
    </recommendedName>
    <alternativeName>
        <fullName evidence="1">UDP-2,3-diacylglucosamine diphosphatase</fullName>
    </alternativeName>
</protein>
<accession>A6VR19</accession>
<sequence length="235" mass="27755">MHKTYFIADLHLSETRPNLTALFVDFMQHLAPDADAVYILGDLFDFWIGDDERSPLIDTVKNQIRTLVQQGVPCYFIHGNRDFLLGKRFAGDCGLRLLPEYQVIDLYGEPTLICHGDTLCTDDLHYQAFRRKVHRPWLQWLFRRLPLKVRLKIAQNIRTKSSRDKQNKSQAIMDVNPEFTRRIFERFQVKRLIHGHTHRQNIHQIPPHFERIVLGDWGETASILEVTPQDIRFRQ</sequence>
<reference key="1">
    <citation type="journal article" date="2010" name="BMC Genomics">
        <title>A genomic perspective on the potential of Actinobacillus succinogenes for industrial succinate production.</title>
        <authorList>
            <person name="McKinlay J.B."/>
            <person name="Laivenieks M."/>
            <person name="Schindler B.D."/>
            <person name="McKinlay A.A."/>
            <person name="Siddaramappa S."/>
            <person name="Challacombe J.F."/>
            <person name="Lowry S.R."/>
            <person name="Clum A."/>
            <person name="Lapidus A.L."/>
            <person name="Burkhart K.B."/>
            <person name="Harkins V."/>
            <person name="Vieille C."/>
        </authorList>
    </citation>
    <scope>NUCLEOTIDE SEQUENCE [LARGE SCALE GENOMIC DNA]</scope>
    <source>
        <strain>ATCC 55618 / DSM 22257 / CCUG 43843 / 130Z</strain>
    </source>
</reference>
<name>LPXH_ACTSZ</name>
<comment type="function">
    <text evidence="1">Hydrolyzes the pyrophosphate bond of UDP-2,3-diacylglucosamine to yield 2,3-diacylglucosamine 1-phosphate (lipid X) and UMP by catalyzing the attack of water at the alpha-P atom. Involved in the biosynthesis of lipid A, a phosphorylated glycolipid that anchors the lipopolysaccharide to the outer membrane of the cell.</text>
</comment>
<comment type="catalytic activity">
    <reaction evidence="1">
        <text>UDP-2-N,3-O-bis[(3R)-3-hydroxytetradecanoyl]-alpha-D-glucosamine + H2O = 2-N,3-O-bis[(3R)-3-hydroxytetradecanoyl]-alpha-D-glucosaminyl 1-phosphate + UMP + 2 H(+)</text>
        <dbReference type="Rhea" id="RHEA:25213"/>
        <dbReference type="ChEBI" id="CHEBI:15377"/>
        <dbReference type="ChEBI" id="CHEBI:15378"/>
        <dbReference type="ChEBI" id="CHEBI:57865"/>
        <dbReference type="ChEBI" id="CHEBI:57957"/>
        <dbReference type="ChEBI" id="CHEBI:78847"/>
        <dbReference type="EC" id="3.6.1.54"/>
    </reaction>
</comment>
<comment type="cofactor">
    <cofactor evidence="1">
        <name>Mn(2+)</name>
        <dbReference type="ChEBI" id="CHEBI:29035"/>
    </cofactor>
    <text evidence="1">Binds 2 Mn(2+) ions per subunit in a binuclear metal center.</text>
</comment>
<comment type="pathway">
    <text evidence="1">Glycolipid biosynthesis; lipid IV(A) biosynthesis; lipid IV(A) from (3R)-3-hydroxytetradecanoyl-[acyl-carrier-protein] and UDP-N-acetyl-alpha-D-glucosamine: step 4/6.</text>
</comment>
<comment type="subcellular location">
    <subcellularLocation>
        <location evidence="1">Cell inner membrane</location>
        <topology evidence="1">Peripheral membrane protein</topology>
        <orientation evidence="1">Cytoplasmic side</orientation>
    </subcellularLocation>
</comment>
<comment type="similarity">
    <text evidence="1">Belongs to the LpxH family.</text>
</comment>
<keyword id="KW-0997">Cell inner membrane</keyword>
<keyword id="KW-1003">Cell membrane</keyword>
<keyword id="KW-0378">Hydrolase</keyword>
<keyword id="KW-0441">Lipid A biosynthesis</keyword>
<keyword id="KW-0444">Lipid biosynthesis</keyword>
<keyword id="KW-0443">Lipid metabolism</keyword>
<keyword id="KW-0464">Manganese</keyword>
<keyword id="KW-0472">Membrane</keyword>
<keyword id="KW-0479">Metal-binding</keyword>
<keyword id="KW-1185">Reference proteome</keyword>